<gene>
    <name evidence="1" type="primary">lolB</name>
    <name type="ordered locus">AHA_3151</name>
</gene>
<protein>
    <recommendedName>
        <fullName evidence="1">Outer-membrane lipoprotein LolB</fullName>
    </recommendedName>
</protein>
<comment type="function">
    <text evidence="1">Plays a critical role in the incorporation of lipoproteins in the outer membrane after they are released by the LolA protein.</text>
</comment>
<comment type="subunit">
    <text evidence="1">Monomer.</text>
</comment>
<comment type="subcellular location">
    <subcellularLocation>
        <location evidence="1">Cell outer membrane</location>
        <topology evidence="1">Lipid-anchor</topology>
    </subcellularLocation>
</comment>
<comment type="similarity">
    <text evidence="1">Belongs to the LolB family.</text>
</comment>
<feature type="signal peptide" evidence="1">
    <location>
        <begin position="1"/>
        <end position="18"/>
    </location>
</feature>
<feature type="chain" id="PRO_0000336594" description="Outer-membrane lipoprotein LolB">
    <location>
        <begin position="19"/>
        <end position="194"/>
    </location>
</feature>
<feature type="lipid moiety-binding region" description="N-palmitoyl cysteine" evidence="1">
    <location>
        <position position="19"/>
    </location>
</feature>
<feature type="lipid moiety-binding region" description="S-diacylglycerol cysteine" evidence="1">
    <location>
        <position position="19"/>
    </location>
</feature>
<organism>
    <name type="scientific">Aeromonas hydrophila subsp. hydrophila (strain ATCC 7966 / DSM 30187 / BCRC 13018 / CCUG 14551 / JCM 1027 / KCTC 2358 / NCIMB 9240 / NCTC 8049)</name>
    <dbReference type="NCBI Taxonomy" id="380703"/>
    <lineage>
        <taxon>Bacteria</taxon>
        <taxon>Pseudomonadati</taxon>
        <taxon>Pseudomonadota</taxon>
        <taxon>Gammaproteobacteria</taxon>
        <taxon>Aeromonadales</taxon>
        <taxon>Aeromonadaceae</taxon>
        <taxon>Aeromonas</taxon>
    </lineage>
</organism>
<evidence type="ECO:0000255" key="1">
    <source>
        <dbReference type="HAMAP-Rule" id="MF_00233"/>
    </source>
</evidence>
<reference key="1">
    <citation type="journal article" date="2006" name="J. Bacteriol.">
        <title>Genome sequence of Aeromonas hydrophila ATCC 7966T: jack of all trades.</title>
        <authorList>
            <person name="Seshadri R."/>
            <person name="Joseph S.W."/>
            <person name="Chopra A.K."/>
            <person name="Sha J."/>
            <person name="Shaw J."/>
            <person name="Graf J."/>
            <person name="Haft D.H."/>
            <person name="Wu M."/>
            <person name="Ren Q."/>
            <person name="Rosovitz M.J."/>
            <person name="Madupu R."/>
            <person name="Tallon L."/>
            <person name="Kim M."/>
            <person name="Jin S."/>
            <person name="Vuong H."/>
            <person name="Stine O.C."/>
            <person name="Ali A."/>
            <person name="Horneman A.J."/>
            <person name="Heidelberg J.F."/>
        </authorList>
    </citation>
    <scope>NUCLEOTIDE SEQUENCE [LARGE SCALE GENOMIC DNA]</scope>
    <source>
        <strain>ATCC 7966 / DSM 30187 / BCRC 13018 / CCUG 14551 / JCM 1027 / KCTC 2358 / NCIMB 9240 / NCTC 8049</strain>
    </source>
</reference>
<sequence>MTLLLRLFTLGCLLLLAGCATTQPQRDQVNWQQERTRLEQLSHWQLSGKMAIITAQQKGSARVNWQQDGDDYRLNLTSLIGTHILELSRSKGEITLIDNEGNPHQSQDAEALIYQLTGWNIPVAGLPEWIKGLPGQAEFELNPDRSLASVRDGQWQIVYGDYRDQDGYRLPHLLTMTGQGSRLKLQINQWTITR</sequence>
<dbReference type="EMBL" id="CP000462">
    <property type="protein sequence ID" value="ABK38656.1"/>
    <property type="molecule type" value="Genomic_DNA"/>
</dbReference>
<dbReference type="RefSeq" id="WP_011706937.1">
    <property type="nucleotide sequence ID" value="NC_008570.1"/>
</dbReference>
<dbReference type="RefSeq" id="YP_857651.1">
    <property type="nucleotide sequence ID" value="NC_008570.1"/>
</dbReference>
<dbReference type="SMR" id="A0KN00"/>
<dbReference type="STRING" id="380703.AHA_3151"/>
<dbReference type="EnsemblBacteria" id="ABK38656">
    <property type="protein sequence ID" value="ABK38656"/>
    <property type="gene ID" value="AHA_3151"/>
</dbReference>
<dbReference type="GeneID" id="4489792"/>
<dbReference type="KEGG" id="aha:AHA_3151"/>
<dbReference type="PATRIC" id="fig|380703.7.peg.3152"/>
<dbReference type="eggNOG" id="COG3017">
    <property type="taxonomic scope" value="Bacteria"/>
</dbReference>
<dbReference type="HOGENOM" id="CLU_092816_1_0_6"/>
<dbReference type="OrthoDB" id="9797618at2"/>
<dbReference type="Proteomes" id="UP000000756">
    <property type="component" value="Chromosome"/>
</dbReference>
<dbReference type="GO" id="GO:0009279">
    <property type="term" value="C:cell outer membrane"/>
    <property type="evidence" value="ECO:0007669"/>
    <property type="project" value="UniProtKB-SubCell"/>
</dbReference>
<dbReference type="GO" id="GO:0044874">
    <property type="term" value="P:lipoprotein localization to outer membrane"/>
    <property type="evidence" value="ECO:0007669"/>
    <property type="project" value="UniProtKB-UniRule"/>
</dbReference>
<dbReference type="GO" id="GO:0015031">
    <property type="term" value="P:protein transport"/>
    <property type="evidence" value="ECO:0007669"/>
    <property type="project" value="UniProtKB-KW"/>
</dbReference>
<dbReference type="CDD" id="cd16326">
    <property type="entry name" value="LolB"/>
    <property type="match status" value="1"/>
</dbReference>
<dbReference type="Gene3D" id="2.50.20.10">
    <property type="entry name" value="Lipoprotein localisation LolA/LolB/LppX"/>
    <property type="match status" value="1"/>
</dbReference>
<dbReference type="HAMAP" id="MF_00233">
    <property type="entry name" value="LolB"/>
    <property type="match status" value="1"/>
</dbReference>
<dbReference type="InterPro" id="IPR029046">
    <property type="entry name" value="LolA/LolB/LppX"/>
</dbReference>
<dbReference type="InterPro" id="IPR004565">
    <property type="entry name" value="OM_lipoprot_LolB"/>
</dbReference>
<dbReference type="NCBIfam" id="TIGR00548">
    <property type="entry name" value="lolB"/>
    <property type="match status" value="1"/>
</dbReference>
<dbReference type="Pfam" id="PF03550">
    <property type="entry name" value="LolB"/>
    <property type="match status" value="1"/>
</dbReference>
<dbReference type="SUPFAM" id="SSF89392">
    <property type="entry name" value="Prokaryotic lipoproteins and lipoprotein localization factors"/>
    <property type="match status" value="1"/>
</dbReference>
<dbReference type="PROSITE" id="PS51257">
    <property type="entry name" value="PROKAR_LIPOPROTEIN"/>
    <property type="match status" value="1"/>
</dbReference>
<accession>A0KN00</accession>
<proteinExistence type="inferred from homology"/>
<name>LOLB_AERHH</name>
<keyword id="KW-0998">Cell outer membrane</keyword>
<keyword id="KW-0143">Chaperone</keyword>
<keyword id="KW-0449">Lipoprotein</keyword>
<keyword id="KW-0472">Membrane</keyword>
<keyword id="KW-0564">Palmitate</keyword>
<keyword id="KW-0653">Protein transport</keyword>
<keyword id="KW-1185">Reference proteome</keyword>
<keyword id="KW-0732">Signal</keyword>
<keyword id="KW-0813">Transport</keyword>